<reference key="1">
    <citation type="journal article" date="2009" name="Environ. Microbiol.">
        <title>The genome of Polaromonas naphthalenivorans strain CJ2, isolated from coal tar-contaminated sediment, reveals physiological and metabolic versatility and evolution through extensive horizontal gene transfer.</title>
        <authorList>
            <person name="Yagi J.M."/>
            <person name="Sims D."/>
            <person name="Brettin T."/>
            <person name="Bruce D."/>
            <person name="Madsen E.L."/>
        </authorList>
    </citation>
    <scope>NUCLEOTIDE SEQUENCE [LARGE SCALE GENOMIC DNA]</scope>
    <source>
        <strain>CJ2</strain>
    </source>
</reference>
<accession>A1VPX4</accession>
<organism>
    <name type="scientific">Polaromonas naphthalenivorans (strain CJ2)</name>
    <dbReference type="NCBI Taxonomy" id="365044"/>
    <lineage>
        <taxon>Bacteria</taxon>
        <taxon>Pseudomonadati</taxon>
        <taxon>Pseudomonadota</taxon>
        <taxon>Betaproteobacteria</taxon>
        <taxon>Burkholderiales</taxon>
        <taxon>Comamonadaceae</taxon>
        <taxon>Polaromonas</taxon>
    </lineage>
</organism>
<comment type="function">
    <text evidence="1">Binds together with bS18 to 16S ribosomal RNA.</text>
</comment>
<comment type="similarity">
    <text evidence="1">Belongs to the bacterial ribosomal protein bS6 family.</text>
</comment>
<feature type="chain" id="PRO_1000005311" description="Small ribosomal subunit protein bS6">
    <location>
        <begin position="1"/>
        <end position="121"/>
    </location>
</feature>
<feature type="region of interest" description="Disordered" evidence="2">
    <location>
        <begin position="99"/>
        <end position="121"/>
    </location>
</feature>
<feature type="compositionally biased region" description="Basic and acidic residues" evidence="2">
    <location>
        <begin position="105"/>
        <end position="115"/>
    </location>
</feature>
<protein>
    <recommendedName>
        <fullName evidence="1">Small ribosomal subunit protein bS6</fullName>
    </recommendedName>
    <alternativeName>
        <fullName evidence="3">30S ribosomal protein S6</fullName>
    </alternativeName>
</protein>
<proteinExistence type="inferred from homology"/>
<sequence length="121" mass="14002">MRHYEIVLLIHPDQSEQVPAMLERYKGMITAGGGTVHRVEDWGRRQLVYLIQKLAKAHYLCINIEASQAVMEEIEHAFKFNDAVLRHLTVVKKKAETGPSLMMRNVEREEARKTQQQEFAA</sequence>
<keyword id="KW-1185">Reference proteome</keyword>
<keyword id="KW-0687">Ribonucleoprotein</keyword>
<keyword id="KW-0689">Ribosomal protein</keyword>
<keyword id="KW-0694">RNA-binding</keyword>
<keyword id="KW-0699">rRNA-binding</keyword>
<evidence type="ECO:0000255" key="1">
    <source>
        <dbReference type="HAMAP-Rule" id="MF_00360"/>
    </source>
</evidence>
<evidence type="ECO:0000256" key="2">
    <source>
        <dbReference type="SAM" id="MobiDB-lite"/>
    </source>
</evidence>
<evidence type="ECO:0000305" key="3"/>
<name>RS6_POLNA</name>
<gene>
    <name evidence="1" type="primary">rpsF</name>
    <name type="ordered locus">Pnap_2395</name>
</gene>
<dbReference type="EMBL" id="CP000529">
    <property type="protein sequence ID" value="ABM37702.1"/>
    <property type="molecule type" value="Genomic_DNA"/>
</dbReference>
<dbReference type="RefSeq" id="WP_011801780.1">
    <property type="nucleotide sequence ID" value="NC_008781.1"/>
</dbReference>
<dbReference type="SMR" id="A1VPX4"/>
<dbReference type="STRING" id="365044.Pnap_2395"/>
<dbReference type="KEGG" id="pna:Pnap_2395"/>
<dbReference type="eggNOG" id="COG0360">
    <property type="taxonomic scope" value="Bacteria"/>
</dbReference>
<dbReference type="HOGENOM" id="CLU_113441_6_1_4"/>
<dbReference type="OrthoDB" id="9812702at2"/>
<dbReference type="Proteomes" id="UP000000644">
    <property type="component" value="Chromosome"/>
</dbReference>
<dbReference type="GO" id="GO:0022627">
    <property type="term" value="C:cytosolic small ribosomal subunit"/>
    <property type="evidence" value="ECO:0007669"/>
    <property type="project" value="TreeGrafter"/>
</dbReference>
<dbReference type="GO" id="GO:0070181">
    <property type="term" value="F:small ribosomal subunit rRNA binding"/>
    <property type="evidence" value="ECO:0007669"/>
    <property type="project" value="TreeGrafter"/>
</dbReference>
<dbReference type="GO" id="GO:0003735">
    <property type="term" value="F:structural constituent of ribosome"/>
    <property type="evidence" value="ECO:0007669"/>
    <property type="project" value="InterPro"/>
</dbReference>
<dbReference type="GO" id="GO:0006412">
    <property type="term" value="P:translation"/>
    <property type="evidence" value="ECO:0007669"/>
    <property type="project" value="UniProtKB-UniRule"/>
</dbReference>
<dbReference type="CDD" id="cd00473">
    <property type="entry name" value="bS6"/>
    <property type="match status" value="1"/>
</dbReference>
<dbReference type="Gene3D" id="3.30.70.60">
    <property type="match status" value="1"/>
</dbReference>
<dbReference type="HAMAP" id="MF_00360">
    <property type="entry name" value="Ribosomal_bS6"/>
    <property type="match status" value="1"/>
</dbReference>
<dbReference type="InterPro" id="IPR000529">
    <property type="entry name" value="Ribosomal_bS6"/>
</dbReference>
<dbReference type="InterPro" id="IPR035980">
    <property type="entry name" value="Ribosomal_bS6_sf"/>
</dbReference>
<dbReference type="InterPro" id="IPR020814">
    <property type="entry name" value="Ribosomal_S6_plastid/chlpt"/>
</dbReference>
<dbReference type="InterPro" id="IPR014717">
    <property type="entry name" value="Transl_elong_EF1B/ribsomal_bS6"/>
</dbReference>
<dbReference type="NCBIfam" id="TIGR00166">
    <property type="entry name" value="S6"/>
    <property type="match status" value="1"/>
</dbReference>
<dbReference type="PANTHER" id="PTHR21011">
    <property type="entry name" value="MITOCHONDRIAL 28S RIBOSOMAL PROTEIN S6"/>
    <property type="match status" value="1"/>
</dbReference>
<dbReference type="PANTHER" id="PTHR21011:SF1">
    <property type="entry name" value="SMALL RIBOSOMAL SUBUNIT PROTEIN BS6M"/>
    <property type="match status" value="1"/>
</dbReference>
<dbReference type="Pfam" id="PF01250">
    <property type="entry name" value="Ribosomal_S6"/>
    <property type="match status" value="1"/>
</dbReference>
<dbReference type="SUPFAM" id="SSF54995">
    <property type="entry name" value="Ribosomal protein S6"/>
    <property type="match status" value="1"/>
</dbReference>